<reference key="1">
    <citation type="journal article" date="1999" name="Nat. Genet.">
        <title>Comparative genomes of Chlamydia pneumoniae and C. trachomatis.</title>
        <authorList>
            <person name="Kalman S."/>
            <person name="Mitchell W.P."/>
            <person name="Marathe R."/>
            <person name="Lammel C.J."/>
            <person name="Fan J."/>
            <person name="Hyman R.W."/>
            <person name="Olinger L."/>
            <person name="Grimwood J."/>
            <person name="Davis R.W."/>
            <person name="Stephens R.S."/>
        </authorList>
    </citation>
    <scope>NUCLEOTIDE SEQUENCE [LARGE SCALE GENOMIC DNA]</scope>
    <source>
        <strain>CWL029</strain>
    </source>
</reference>
<reference key="2">
    <citation type="journal article" date="2000" name="Nucleic Acids Res.">
        <title>Genome sequences of Chlamydia trachomatis MoPn and Chlamydia pneumoniae AR39.</title>
        <authorList>
            <person name="Read T.D."/>
            <person name="Brunham R.C."/>
            <person name="Shen C."/>
            <person name="Gill S.R."/>
            <person name="Heidelberg J.F."/>
            <person name="White O."/>
            <person name="Hickey E.K."/>
            <person name="Peterson J.D."/>
            <person name="Utterback T.R."/>
            <person name="Berry K.J."/>
            <person name="Bass S."/>
            <person name="Linher K.D."/>
            <person name="Weidman J.F."/>
            <person name="Khouri H.M."/>
            <person name="Craven B."/>
            <person name="Bowman C."/>
            <person name="Dodson R.J."/>
            <person name="Gwinn M.L."/>
            <person name="Nelson W.C."/>
            <person name="DeBoy R.T."/>
            <person name="Kolonay J.F."/>
            <person name="McClarty G."/>
            <person name="Salzberg S.L."/>
            <person name="Eisen J.A."/>
            <person name="Fraser C.M."/>
        </authorList>
    </citation>
    <scope>NUCLEOTIDE SEQUENCE [LARGE SCALE GENOMIC DNA]</scope>
    <source>
        <strain>AR39</strain>
    </source>
</reference>
<reference key="3">
    <citation type="journal article" date="2000" name="Nucleic Acids Res.">
        <title>Comparison of whole genome sequences of Chlamydia pneumoniae J138 from Japan and CWL029 from USA.</title>
        <authorList>
            <person name="Shirai M."/>
            <person name="Hirakawa H."/>
            <person name="Kimoto M."/>
            <person name="Tabuchi M."/>
            <person name="Kishi F."/>
            <person name="Ouchi K."/>
            <person name="Shiba T."/>
            <person name="Ishii K."/>
            <person name="Hattori M."/>
            <person name="Kuhara S."/>
            <person name="Nakazawa T."/>
        </authorList>
    </citation>
    <scope>NUCLEOTIDE SEQUENCE [LARGE SCALE GENOMIC DNA]</scope>
    <source>
        <strain>J138</strain>
    </source>
</reference>
<reference key="4">
    <citation type="submission" date="2002-05" db="EMBL/GenBank/DDBJ databases">
        <title>The genome sequence of Chlamydia pneumoniae TW183 and comparison with other Chlamydia strains based on whole genome sequence analysis.</title>
        <authorList>
            <person name="Geng M.M."/>
            <person name="Schuhmacher A."/>
            <person name="Muehldorfer I."/>
            <person name="Bensch K.W."/>
            <person name="Schaefer K.P."/>
            <person name="Schneider S."/>
            <person name="Pohl T."/>
            <person name="Essig A."/>
            <person name="Marre R."/>
            <person name="Melchers K."/>
        </authorList>
    </citation>
    <scope>NUCLEOTIDE SEQUENCE [LARGE SCALE GENOMIC DNA]</scope>
    <source>
        <strain>TW-183</strain>
    </source>
</reference>
<name>MCSB_CHLPN</name>
<feature type="chain" id="PRO_0000212019" description="Protein-arginine kinase">
    <location>
        <begin position="1"/>
        <end position="358"/>
    </location>
</feature>
<feature type="domain" description="Phosphagen kinase C-terminal" evidence="1">
    <location>
        <begin position="23"/>
        <end position="250"/>
    </location>
</feature>
<feature type="binding site" evidence="1">
    <location>
        <begin position="26"/>
        <end position="30"/>
    </location>
    <ligand>
        <name>ATP</name>
        <dbReference type="ChEBI" id="CHEBI:30616"/>
    </ligand>
</feature>
<feature type="binding site" evidence="1">
    <location>
        <begin position="174"/>
        <end position="178"/>
    </location>
    <ligand>
        <name>ATP</name>
        <dbReference type="ChEBI" id="CHEBI:30616"/>
    </ligand>
</feature>
<feature type="binding site" evidence="1">
    <location>
        <begin position="203"/>
        <end position="208"/>
    </location>
    <ligand>
        <name>ATP</name>
        <dbReference type="ChEBI" id="CHEBI:30616"/>
    </ligand>
</feature>
<feature type="sequence conflict" description="In Ref. 3; BAA98908." evidence="2" ref="3">
    <original>D</original>
    <variation>N</variation>
    <location>
        <position position="329"/>
    </location>
</feature>
<organism>
    <name type="scientific">Chlamydia pneumoniae</name>
    <name type="common">Chlamydophila pneumoniae</name>
    <dbReference type="NCBI Taxonomy" id="83558"/>
    <lineage>
        <taxon>Bacteria</taxon>
        <taxon>Pseudomonadati</taxon>
        <taxon>Chlamydiota</taxon>
        <taxon>Chlamydiia</taxon>
        <taxon>Chlamydiales</taxon>
        <taxon>Chlamydiaceae</taxon>
        <taxon>Chlamydia/Chlamydophila group</taxon>
        <taxon>Chlamydia</taxon>
    </lineage>
</organism>
<evidence type="ECO:0000255" key="1">
    <source>
        <dbReference type="HAMAP-Rule" id="MF_00602"/>
    </source>
</evidence>
<evidence type="ECO:0000305" key="2"/>
<dbReference type="EC" id="2.7.14.1" evidence="1"/>
<dbReference type="EMBL" id="AE001363">
    <property type="protein sequence ID" value="AAD18840.1"/>
    <property type="molecule type" value="Genomic_DNA"/>
</dbReference>
<dbReference type="EMBL" id="AE002161">
    <property type="protein sequence ID" value="AAF37938.2"/>
    <property type="molecule type" value="Genomic_DNA"/>
</dbReference>
<dbReference type="EMBL" id="BA000008">
    <property type="protein sequence ID" value="BAA98908.1"/>
    <property type="molecule type" value="Genomic_DNA"/>
</dbReference>
<dbReference type="EMBL" id="AE009440">
    <property type="protein sequence ID" value="AAP98657.1"/>
    <property type="molecule type" value="Genomic_DNA"/>
</dbReference>
<dbReference type="PIR" id="B86578">
    <property type="entry name" value="B86578"/>
</dbReference>
<dbReference type="PIR" id="E72045">
    <property type="entry name" value="E72045"/>
</dbReference>
<dbReference type="PIR" id="H81618">
    <property type="entry name" value="H81618"/>
</dbReference>
<dbReference type="RefSeq" id="NP_224897.1">
    <property type="nucleotide sequence ID" value="NC_000922.1"/>
</dbReference>
<dbReference type="RefSeq" id="WP_010883339.1">
    <property type="nucleotide sequence ID" value="NZ_LN847257.1"/>
</dbReference>
<dbReference type="RefSeq" id="WP_010895357.1">
    <property type="nucleotide sequence ID" value="NZ_LN846995.1"/>
</dbReference>
<dbReference type="SMR" id="Q9Z7K4"/>
<dbReference type="STRING" id="406984.CPK_ORF00105"/>
<dbReference type="GeneID" id="45050755"/>
<dbReference type="KEGG" id="cpa:CP_0045"/>
<dbReference type="KEGG" id="cpj:karG"/>
<dbReference type="KEGG" id="cpn:CPn_0701"/>
<dbReference type="KEGG" id="cpt:CpB0728"/>
<dbReference type="PATRIC" id="fig|115713.3.peg.775"/>
<dbReference type="eggNOG" id="COG3869">
    <property type="taxonomic scope" value="Bacteria"/>
</dbReference>
<dbReference type="HOGENOM" id="CLU_066591_0_0_0"/>
<dbReference type="OrthoDB" id="18720at2"/>
<dbReference type="Proteomes" id="UP000000583">
    <property type="component" value="Chromosome"/>
</dbReference>
<dbReference type="Proteomes" id="UP000000801">
    <property type="component" value="Chromosome"/>
</dbReference>
<dbReference type="GO" id="GO:0005615">
    <property type="term" value="C:extracellular space"/>
    <property type="evidence" value="ECO:0007669"/>
    <property type="project" value="TreeGrafter"/>
</dbReference>
<dbReference type="GO" id="GO:0005524">
    <property type="term" value="F:ATP binding"/>
    <property type="evidence" value="ECO:0007669"/>
    <property type="project" value="UniProtKB-KW"/>
</dbReference>
<dbReference type="GO" id="GO:0004111">
    <property type="term" value="F:creatine kinase activity"/>
    <property type="evidence" value="ECO:0007669"/>
    <property type="project" value="InterPro"/>
</dbReference>
<dbReference type="GO" id="GO:0004672">
    <property type="term" value="F:protein kinase activity"/>
    <property type="evidence" value="ECO:0007669"/>
    <property type="project" value="UniProtKB-UniRule"/>
</dbReference>
<dbReference type="GO" id="GO:0046314">
    <property type="term" value="P:phosphocreatine biosynthetic process"/>
    <property type="evidence" value="ECO:0007669"/>
    <property type="project" value="InterPro"/>
</dbReference>
<dbReference type="Gene3D" id="3.30.590.10">
    <property type="entry name" value="Glutamine synthetase/guanido kinase, catalytic domain"/>
    <property type="match status" value="1"/>
</dbReference>
<dbReference type="HAMAP" id="MF_00602">
    <property type="entry name" value="Prot_Arg_kinase"/>
    <property type="match status" value="1"/>
</dbReference>
<dbReference type="InterPro" id="IPR023660">
    <property type="entry name" value="Arg_Kinase"/>
</dbReference>
<dbReference type="InterPro" id="IPR000749">
    <property type="entry name" value="ATP-guanido_PTrfase"/>
</dbReference>
<dbReference type="InterPro" id="IPR022414">
    <property type="entry name" value="ATP-guanido_PTrfase_cat"/>
</dbReference>
<dbReference type="InterPro" id="IPR014746">
    <property type="entry name" value="Gln_synth/guanido_kin_cat_dom"/>
</dbReference>
<dbReference type="NCBIfam" id="NF002191">
    <property type="entry name" value="PRK01059.1-1"/>
    <property type="match status" value="1"/>
</dbReference>
<dbReference type="PANTHER" id="PTHR11547:SF38">
    <property type="entry name" value="ARGININE KINASE 1-RELATED"/>
    <property type="match status" value="1"/>
</dbReference>
<dbReference type="PANTHER" id="PTHR11547">
    <property type="entry name" value="ARGININE OR CREATINE KINASE"/>
    <property type="match status" value="1"/>
</dbReference>
<dbReference type="Pfam" id="PF00217">
    <property type="entry name" value="ATP-gua_Ptrans"/>
    <property type="match status" value="1"/>
</dbReference>
<dbReference type="SUPFAM" id="SSF55931">
    <property type="entry name" value="Glutamine synthetase/guanido kinase"/>
    <property type="match status" value="1"/>
</dbReference>
<dbReference type="PROSITE" id="PS51510">
    <property type="entry name" value="PHOSPHAGEN_KINASE_C"/>
    <property type="match status" value="1"/>
</dbReference>
<gene>
    <name evidence="1" type="primary">mcsB</name>
    <name type="ordered locus">CPn_0701</name>
    <name type="ordered locus">CP_0045</name>
    <name type="ordered locus">CPj0701</name>
    <name type="ordered locus">CpB0728</name>
</gene>
<sequence length="358" mass="40142">MTLPNDLLETLVKRKESPQANKVWPVTTFSLARNLSVSKFLPCLSKEQKLEILQFITSHFNHIEGFGEFIVLPLKDTPLWQKEFLLEHFLLPYDLVGNPEGEALVVSRSGDFLAAINFQDHLVLHGIDFQGNVEKTLDQLVQLDSYLHSKLSFAFSSEFGFLTTNPKNCGTGLKSQCFLHIPALLYSKEFTNLIDEEVEIITSSLLLGVTGFPGNIVVLSNRCSLGLTEELLLSSLRITASKLSVAEVAAKKRLSEENSGDLKNLILRSLGLLTHSCQLELKETLDALSWIQLGIDLGLIKVTENHPLWNPLFWQIRRAHLALQKQAEDSRDLQKDTISHLRASVLKELTKGLSPESF</sequence>
<proteinExistence type="inferred from homology"/>
<accession>Q9Z7K4</accession>
<accession>Q9JSB9</accession>
<accession>Q9K2E7</accession>
<protein>
    <recommendedName>
        <fullName evidence="1">Protein-arginine kinase</fullName>
        <ecNumber evidence="1">2.7.14.1</ecNumber>
    </recommendedName>
</protein>
<comment type="function">
    <text evidence="1">Catalyzes the specific phosphorylation of arginine residues in proteins.</text>
</comment>
<comment type="catalytic activity">
    <reaction evidence="1">
        <text>L-arginyl-[protein] + ATP = N(omega)-phospho-L-arginyl-[protein] + ADP + H(+)</text>
        <dbReference type="Rhea" id="RHEA:43384"/>
        <dbReference type="Rhea" id="RHEA-COMP:10532"/>
        <dbReference type="Rhea" id="RHEA-COMP:10533"/>
        <dbReference type="ChEBI" id="CHEBI:15378"/>
        <dbReference type="ChEBI" id="CHEBI:29965"/>
        <dbReference type="ChEBI" id="CHEBI:30616"/>
        <dbReference type="ChEBI" id="CHEBI:83226"/>
        <dbReference type="ChEBI" id="CHEBI:456216"/>
        <dbReference type="EC" id="2.7.14.1"/>
    </reaction>
</comment>
<comment type="similarity">
    <text evidence="1">Belongs to the ATP:guanido phosphotransferase family.</text>
</comment>
<keyword id="KW-0067">ATP-binding</keyword>
<keyword id="KW-0418">Kinase</keyword>
<keyword id="KW-0547">Nucleotide-binding</keyword>
<keyword id="KW-0808">Transferase</keyword>